<accession>O47427</accession>
<reference key="1">
    <citation type="journal article" date="1999" name="Mol. Biol. Evol.">
        <title>Complete sequence, gene arrangement, and genetic code of mitochondrial DNA of the cephalochordate Branchiostoma floridae (Amphioxus).</title>
        <authorList>
            <person name="Boore J.L."/>
            <person name="Daehler L.L."/>
            <person name="Brown W.M."/>
        </authorList>
    </citation>
    <scope>NUCLEOTIDE SEQUENCE [LARGE SCALE GENOMIC DNA]</scope>
    <source>
        <strain evidence="4">S238N-H82</strain>
    </source>
</reference>
<dbReference type="EMBL" id="AF098298">
    <property type="protein sequence ID" value="AAB87996.1"/>
    <property type="molecule type" value="Genomic_DNA"/>
</dbReference>
<dbReference type="RefSeq" id="NP_007759.1">
    <property type="nucleotide sequence ID" value="NC_000834.1"/>
</dbReference>
<dbReference type="SMR" id="O47427"/>
<dbReference type="STRING" id="7739.O47427"/>
<dbReference type="GeneID" id="808728"/>
<dbReference type="KEGG" id="bfo:808728"/>
<dbReference type="CTD" id="4509"/>
<dbReference type="InParanoid" id="O47427"/>
<dbReference type="Proteomes" id="UP000001554">
    <property type="component" value="Mitochondrion MT"/>
</dbReference>
<dbReference type="GO" id="GO:0031966">
    <property type="term" value="C:mitochondrial membrane"/>
    <property type="evidence" value="ECO:0007669"/>
    <property type="project" value="UniProtKB-SubCell"/>
</dbReference>
<dbReference type="GO" id="GO:0045259">
    <property type="term" value="C:proton-transporting ATP synthase complex"/>
    <property type="evidence" value="ECO:0007669"/>
    <property type="project" value="UniProtKB-KW"/>
</dbReference>
<dbReference type="GO" id="GO:0015078">
    <property type="term" value="F:proton transmembrane transporter activity"/>
    <property type="evidence" value="ECO:0007669"/>
    <property type="project" value="InterPro"/>
</dbReference>
<dbReference type="GO" id="GO:0015986">
    <property type="term" value="P:proton motive force-driven ATP synthesis"/>
    <property type="evidence" value="ECO:0007669"/>
    <property type="project" value="InterPro"/>
</dbReference>
<dbReference type="InterPro" id="IPR001421">
    <property type="entry name" value="ATP8_metazoa"/>
</dbReference>
<dbReference type="InterPro" id="IPR050635">
    <property type="entry name" value="ATPase_protein_8"/>
</dbReference>
<dbReference type="PANTHER" id="PTHR39937">
    <property type="entry name" value="ATP SYNTHASE PROTEIN 8"/>
    <property type="match status" value="1"/>
</dbReference>
<dbReference type="PANTHER" id="PTHR39937:SF1">
    <property type="entry name" value="ATP SYNTHASE PROTEIN 8"/>
    <property type="match status" value="1"/>
</dbReference>
<dbReference type="Pfam" id="PF00895">
    <property type="entry name" value="ATP-synt_8"/>
    <property type="match status" value="1"/>
</dbReference>
<evidence type="ECO:0000250" key="1"/>
<evidence type="ECO:0000255" key="2"/>
<evidence type="ECO:0000305" key="3"/>
<evidence type="ECO:0000312" key="4">
    <source>
        <dbReference type="Proteomes" id="UP000001554"/>
    </source>
</evidence>
<protein>
    <recommendedName>
        <fullName>ATP synthase protein 8</fullName>
    </recommendedName>
    <alternativeName>
        <fullName>A6L</fullName>
    </alternativeName>
    <alternativeName>
        <fullName>F-ATPase subunit 8</fullName>
    </alternativeName>
</protein>
<sequence>MPQLNPIPWVFLFFLVWLVLGFLGLQKFTSIVTTTLDDSSEEVEVKSKEYSWPW</sequence>
<proteinExistence type="inferred from homology"/>
<name>ATP8_BRAFL</name>
<organism>
    <name type="scientific">Branchiostoma floridae</name>
    <name type="common">Florida lancelet</name>
    <name type="synonym">Amphioxus</name>
    <dbReference type="NCBI Taxonomy" id="7739"/>
    <lineage>
        <taxon>Eukaryota</taxon>
        <taxon>Metazoa</taxon>
        <taxon>Chordata</taxon>
        <taxon>Cephalochordata</taxon>
        <taxon>Leptocardii</taxon>
        <taxon>Amphioxiformes</taxon>
        <taxon>Branchiostomatidae</taxon>
        <taxon>Branchiostoma</taxon>
    </lineage>
</organism>
<keyword id="KW-0066">ATP synthesis</keyword>
<keyword id="KW-0138">CF(0)</keyword>
<keyword id="KW-0375">Hydrogen ion transport</keyword>
<keyword id="KW-0406">Ion transport</keyword>
<keyword id="KW-0472">Membrane</keyword>
<keyword id="KW-0496">Mitochondrion</keyword>
<keyword id="KW-1185">Reference proteome</keyword>
<keyword id="KW-0812">Transmembrane</keyword>
<keyword id="KW-1133">Transmembrane helix</keyword>
<keyword id="KW-0813">Transport</keyword>
<comment type="function">
    <text evidence="1">Mitochondrial membrane ATP synthase (F(1)F(0) ATP synthase or Complex V) produces ATP from ADP in the presence of a proton gradient across the membrane which is generated by electron transport complexes of the respiratory chain. F-type ATPases consist of two structural domains, F(1) - containing the extramembraneous catalytic core and F(0) - containing the membrane proton channel, linked together by a central stalk and a peripheral stalk. During catalysis, ATP synthesis in the catalytic domain of F(1) is coupled via a rotary mechanism of the central stalk subunits to proton translocation. Part of the complex F(0) domain. Minor subunit located with subunit a in the membrane (By similarity).</text>
</comment>
<comment type="subunit">
    <text evidence="1">F-type ATPases have 2 components, CF(1) - the catalytic core - and CF(0) - the membrane proton channel.</text>
</comment>
<comment type="subcellular location">
    <subcellularLocation>
        <location>Mitochondrion membrane</location>
        <topology>Single-pass membrane protein</topology>
    </subcellularLocation>
</comment>
<comment type="similarity">
    <text evidence="3">Belongs to the ATPase protein 8 family.</text>
</comment>
<feature type="chain" id="PRO_0000195496" description="ATP synthase protein 8">
    <location>
        <begin position="1"/>
        <end position="54"/>
    </location>
</feature>
<feature type="transmembrane region" description="Helical" evidence="2">
    <location>
        <begin position="9"/>
        <end position="25"/>
    </location>
</feature>
<geneLocation type="mitochondrion"/>
<gene>
    <name type="primary">MTATP8</name>
    <name type="synonym">ATP8</name>
    <name type="synonym">ATPASE8</name>
</gene>